<reference key="1">
    <citation type="journal article" date="2006" name="Proc. Natl. Acad. Sci. U.S.A.">
        <title>Comparative genomics of the lactic acid bacteria.</title>
        <authorList>
            <person name="Makarova K.S."/>
            <person name="Slesarev A."/>
            <person name="Wolf Y.I."/>
            <person name="Sorokin A."/>
            <person name="Mirkin B."/>
            <person name="Koonin E.V."/>
            <person name="Pavlov A."/>
            <person name="Pavlova N."/>
            <person name="Karamychev V."/>
            <person name="Polouchine N."/>
            <person name="Shakhova V."/>
            <person name="Grigoriev I."/>
            <person name="Lou Y."/>
            <person name="Rohksar D."/>
            <person name="Lucas S."/>
            <person name="Huang K."/>
            <person name="Goodstein D.M."/>
            <person name="Hawkins T."/>
            <person name="Plengvidhya V."/>
            <person name="Welker D."/>
            <person name="Hughes J."/>
            <person name="Goh Y."/>
            <person name="Benson A."/>
            <person name="Baldwin K."/>
            <person name="Lee J.-H."/>
            <person name="Diaz-Muniz I."/>
            <person name="Dosti B."/>
            <person name="Smeianov V."/>
            <person name="Wechter W."/>
            <person name="Barabote R."/>
            <person name="Lorca G."/>
            <person name="Altermann E."/>
            <person name="Barrangou R."/>
            <person name="Ganesan B."/>
            <person name="Xie Y."/>
            <person name="Rawsthorne H."/>
            <person name="Tamir D."/>
            <person name="Parker C."/>
            <person name="Breidt F."/>
            <person name="Broadbent J.R."/>
            <person name="Hutkins R."/>
            <person name="O'Sullivan D."/>
            <person name="Steele J."/>
            <person name="Unlu G."/>
            <person name="Saier M.H. Jr."/>
            <person name="Klaenhammer T."/>
            <person name="Richardson P."/>
            <person name="Kozyavkin S."/>
            <person name="Weimer B.C."/>
            <person name="Mills D.A."/>
        </authorList>
    </citation>
    <scope>NUCLEOTIDE SEQUENCE [LARGE SCALE GENOMIC DNA]</scope>
    <source>
        <strain>ATCC BAA-331 / PSU-1</strain>
    </source>
</reference>
<proteinExistence type="inferred from homology"/>
<organism>
    <name type="scientific">Oenococcus oeni (strain ATCC BAA-331 / PSU-1)</name>
    <dbReference type="NCBI Taxonomy" id="203123"/>
    <lineage>
        <taxon>Bacteria</taxon>
        <taxon>Bacillati</taxon>
        <taxon>Bacillota</taxon>
        <taxon>Bacilli</taxon>
        <taxon>Lactobacillales</taxon>
        <taxon>Lactobacillaceae</taxon>
        <taxon>Oenococcus</taxon>
    </lineage>
</organism>
<keyword id="KW-0066">ATP synthesis</keyword>
<keyword id="KW-0067">ATP-binding</keyword>
<keyword id="KW-1003">Cell membrane</keyword>
<keyword id="KW-0139">CF(1)</keyword>
<keyword id="KW-0375">Hydrogen ion transport</keyword>
<keyword id="KW-0406">Ion transport</keyword>
<keyword id="KW-0472">Membrane</keyword>
<keyword id="KW-0547">Nucleotide-binding</keyword>
<keyword id="KW-1185">Reference proteome</keyword>
<keyword id="KW-1278">Translocase</keyword>
<keyword id="KW-0813">Transport</keyword>
<accession>Q04G22</accession>
<dbReference type="EC" id="7.1.2.2" evidence="1"/>
<dbReference type="EMBL" id="CP000411">
    <property type="protein sequence ID" value="ABJ56600.1"/>
    <property type="molecule type" value="Genomic_DNA"/>
</dbReference>
<dbReference type="RefSeq" id="WP_002818530.1">
    <property type="nucleotide sequence ID" value="NC_008528.1"/>
</dbReference>
<dbReference type="SMR" id="Q04G22"/>
<dbReference type="STRING" id="203123.OEOE_0663"/>
<dbReference type="GeneID" id="75066260"/>
<dbReference type="KEGG" id="ooe:OEOE_0663"/>
<dbReference type="eggNOG" id="COG0056">
    <property type="taxonomic scope" value="Bacteria"/>
</dbReference>
<dbReference type="HOGENOM" id="CLU_010091_2_1_9"/>
<dbReference type="Proteomes" id="UP000000774">
    <property type="component" value="Chromosome"/>
</dbReference>
<dbReference type="GO" id="GO:0005886">
    <property type="term" value="C:plasma membrane"/>
    <property type="evidence" value="ECO:0007669"/>
    <property type="project" value="UniProtKB-SubCell"/>
</dbReference>
<dbReference type="GO" id="GO:0045259">
    <property type="term" value="C:proton-transporting ATP synthase complex"/>
    <property type="evidence" value="ECO:0007669"/>
    <property type="project" value="UniProtKB-KW"/>
</dbReference>
<dbReference type="GO" id="GO:0043531">
    <property type="term" value="F:ADP binding"/>
    <property type="evidence" value="ECO:0007669"/>
    <property type="project" value="TreeGrafter"/>
</dbReference>
<dbReference type="GO" id="GO:0005524">
    <property type="term" value="F:ATP binding"/>
    <property type="evidence" value="ECO:0007669"/>
    <property type="project" value="UniProtKB-UniRule"/>
</dbReference>
<dbReference type="GO" id="GO:0046933">
    <property type="term" value="F:proton-transporting ATP synthase activity, rotational mechanism"/>
    <property type="evidence" value="ECO:0007669"/>
    <property type="project" value="UniProtKB-UniRule"/>
</dbReference>
<dbReference type="CDD" id="cd18113">
    <property type="entry name" value="ATP-synt_F1_alpha_C"/>
    <property type="match status" value="1"/>
</dbReference>
<dbReference type="CDD" id="cd18116">
    <property type="entry name" value="ATP-synt_F1_alpha_N"/>
    <property type="match status" value="1"/>
</dbReference>
<dbReference type="CDD" id="cd01132">
    <property type="entry name" value="F1-ATPase_alpha_CD"/>
    <property type="match status" value="1"/>
</dbReference>
<dbReference type="FunFam" id="1.20.150.20:FF:000001">
    <property type="entry name" value="ATP synthase subunit alpha"/>
    <property type="match status" value="1"/>
</dbReference>
<dbReference type="FunFam" id="2.40.30.20:FF:000001">
    <property type="entry name" value="ATP synthase subunit alpha"/>
    <property type="match status" value="1"/>
</dbReference>
<dbReference type="FunFam" id="3.40.50.300:FF:000002">
    <property type="entry name" value="ATP synthase subunit alpha"/>
    <property type="match status" value="1"/>
</dbReference>
<dbReference type="Gene3D" id="2.40.30.20">
    <property type="match status" value="1"/>
</dbReference>
<dbReference type="Gene3D" id="1.20.150.20">
    <property type="entry name" value="ATP synthase alpha/beta chain, C-terminal domain"/>
    <property type="match status" value="1"/>
</dbReference>
<dbReference type="Gene3D" id="3.40.50.300">
    <property type="entry name" value="P-loop containing nucleotide triphosphate hydrolases"/>
    <property type="match status" value="1"/>
</dbReference>
<dbReference type="HAMAP" id="MF_01346">
    <property type="entry name" value="ATP_synth_alpha_bact"/>
    <property type="match status" value="1"/>
</dbReference>
<dbReference type="InterPro" id="IPR023366">
    <property type="entry name" value="ATP_synth_asu-like_sf"/>
</dbReference>
<dbReference type="InterPro" id="IPR000793">
    <property type="entry name" value="ATP_synth_asu_C"/>
</dbReference>
<dbReference type="InterPro" id="IPR038376">
    <property type="entry name" value="ATP_synth_asu_C_sf"/>
</dbReference>
<dbReference type="InterPro" id="IPR033732">
    <property type="entry name" value="ATP_synth_F1_a_nt-bd_dom"/>
</dbReference>
<dbReference type="InterPro" id="IPR005294">
    <property type="entry name" value="ATP_synth_F1_asu"/>
</dbReference>
<dbReference type="InterPro" id="IPR020003">
    <property type="entry name" value="ATPase_a/bsu_AS"/>
</dbReference>
<dbReference type="InterPro" id="IPR004100">
    <property type="entry name" value="ATPase_F1/V1/A1_a/bsu_N"/>
</dbReference>
<dbReference type="InterPro" id="IPR036121">
    <property type="entry name" value="ATPase_F1/V1/A1_a/bsu_N_sf"/>
</dbReference>
<dbReference type="InterPro" id="IPR000194">
    <property type="entry name" value="ATPase_F1/V1/A1_a/bsu_nucl-bd"/>
</dbReference>
<dbReference type="InterPro" id="IPR027417">
    <property type="entry name" value="P-loop_NTPase"/>
</dbReference>
<dbReference type="NCBIfam" id="TIGR00962">
    <property type="entry name" value="atpA"/>
    <property type="match status" value="1"/>
</dbReference>
<dbReference type="NCBIfam" id="NF009884">
    <property type="entry name" value="PRK13343.1"/>
    <property type="match status" value="1"/>
</dbReference>
<dbReference type="PANTHER" id="PTHR48082">
    <property type="entry name" value="ATP SYNTHASE SUBUNIT ALPHA, MITOCHONDRIAL"/>
    <property type="match status" value="1"/>
</dbReference>
<dbReference type="PANTHER" id="PTHR48082:SF2">
    <property type="entry name" value="ATP SYNTHASE SUBUNIT ALPHA, MITOCHONDRIAL"/>
    <property type="match status" value="1"/>
</dbReference>
<dbReference type="Pfam" id="PF00006">
    <property type="entry name" value="ATP-synt_ab"/>
    <property type="match status" value="1"/>
</dbReference>
<dbReference type="Pfam" id="PF00306">
    <property type="entry name" value="ATP-synt_ab_C"/>
    <property type="match status" value="1"/>
</dbReference>
<dbReference type="Pfam" id="PF02874">
    <property type="entry name" value="ATP-synt_ab_N"/>
    <property type="match status" value="1"/>
</dbReference>
<dbReference type="PIRSF" id="PIRSF039088">
    <property type="entry name" value="F_ATPase_subunit_alpha"/>
    <property type="match status" value="1"/>
</dbReference>
<dbReference type="SUPFAM" id="SSF47917">
    <property type="entry name" value="C-terminal domain of alpha and beta subunits of F1 ATP synthase"/>
    <property type="match status" value="1"/>
</dbReference>
<dbReference type="SUPFAM" id="SSF50615">
    <property type="entry name" value="N-terminal domain of alpha and beta subunits of F1 ATP synthase"/>
    <property type="match status" value="1"/>
</dbReference>
<dbReference type="SUPFAM" id="SSF52540">
    <property type="entry name" value="P-loop containing nucleoside triphosphate hydrolases"/>
    <property type="match status" value="1"/>
</dbReference>
<dbReference type="PROSITE" id="PS00152">
    <property type="entry name" value="ATPASE_ALPHA_BETA"/>
    <property type="match status" value="1"/>
</dbReference>
<gene>
    <name evidence="1" type="primary">atpA</name>
    <name type="ordered locus">OEOE_0663</name>
</gene>
<sequence length="520" mass="56723">MAIKSDQISSLIKQQLEKYDSTLKIDEVGTVTYVGDGVARASGLANVMSGELVEFENGVYGMAQNLEESEVGIIVLGDFDGISQGDTVKRTGKVMEVPVGDEMIGRVVNALGQPIDGNGAIKTKHTRPVEFKAPGVMQRKSVFEPLQTGIKVIDALVPIGRGQRELIIGDRKTGKTSLAIDTILNQKDQDMIVVYVAIGQKDSTVRTQVETLREMGALDYTIVVSAAPSEPAPMLYLAPYVGAALGEYFMYNGKHVLIVYDDLSKQATAYRELSLILRRPPGREAYPGDVFYLHSRLLERAAKLSDELGGGSMTALPIIETQAGDVSAYIPTNVISITDGQIFLDADQFYSGNRPAIDAGTSVSRVGGDAQIKAMKKVSGTLRLDLASYHELEAFAQFGSDLDAPTQAKLARGRRTVEVLNQPLHQPMPVEHQVIVLYALTHGYLDDIDVSDIQRFQKELIDFVSGDKSYKKIFAAIKKTGNLPDEKDINSAIDDFKKHFSKSVEPTDYVAPSTKQEANK</sequence>
<evidence type="ECO:0000255" key="1">
    <source>
        <dbReference type="HAMAP-Rule" id="MF_01346"/>
    </source>
</evidence>
<feature type="chain" id="PRO_0000302678" description="ATP synthase subunit alpha">
    <location>
        <begin position="1"/>
        <end position="520"/>
    </location>
</feature>
<feature type="binding site" evidence="1">
    <location>
        <begin position="169"/>
        <end position="176"/>
    </location>
    <ligand>
        <name>ATP</name>
        <dbReference type="ChEBI" id="CHEBI:30616"/>
    </ligand>
</feature>
<feature type="site" description="Required for activity" evidence="1">
    <location>
        <position position="362"/>
    </location>
</feature>
<comment type="function">
    <text evidence="1">Produces ATP from ADP in the presence of a proton gradient across the membrane. The alpha chain is a regulatory subunit.</text>
</comment>
<comment type="catalytic activity">
    <reaction evidence="1">
        <text>ATP + H2O + 4 H(+)(in) = ADP + phosphate + 5 H(+)(out)</text>
        <dbReference type="Rhea" id="RHEA:57720"/>
        <dbReference type="ChEBI" id="CHEBI:15377"/>
        <dbReference type="ChEBI" id="CHEBI:15378"/>
        <dbReference type="ChEBI" id="CHEBI:30616"/>
        <dbReference type="ChEBI" id="CHEBI:43474"/>
        <dbReference type="ChEBI" id="CHEBI:456216"/>
        <dbReference type="EC" id="7.1.2.2"/>
    </reaction>
</comment>
<comment type="subunit">
    <text evidence="1">F-type ATPases have 2 components, CF(1) - the catalytic core - and CF(0) - the membrane proton channel. CF(1) has five subunits: alpha(3), beta(3), gamma(1), delta(1), epsilon(1). CF(0) has three main subunits: a(1), b(2) and c(9-12). The alpha and beta chains form an alternating ring which encloses part of the gamma chain. CF(1) is attached to CF(0) by a central stalk formed by the gamma and epsilon chains, while a peripheral stalk is formed by the delta and b chains.</text>
</comment>
<comment type="subcellular location">
    <subcellularLocation>
        <location evidence="1">Cell membrane</location>
        <topology evidence="1">Peripheral membrane protein</topology>
    </subcellularLocation>
</comment>
<comment type="similarity">
    <text evidence="1">Belongs to the ATPase alpha/beta chains family.</text>
</comment>
<name>ATPA_OENOB</name>
<protein>
    <recommendedName>
        <fullName evidence="1">ATP synthase subunit alpha</fullName>
        <ecNumber evidence="1">7.1.2.2</ecNumber>
    </recommendedName>
    <alternativeName>
        <fullName evidence="1">ATP synthase F1 sector subunit alpha</fullName>
    </alternativeName>
    <alternativeName>
        <fullName evidence="1">F-ATPase subunit alpha</fullName>
    </alternativeName>
</protein>